<accession>Q5M1Z0</accession>
<keyword id="KW-0067">ATP-binding</keyword>
<keyword id="KW-0227">DNA damage</keyword>
<keyword id="KW-0234">DNA repair</keyword>
<keyword id="KW-0238">DNA-binding</keyword>
<keyword id="KW-0547">Nucleotide-binding</keyword>
<comment type="function">
    <text evidence="1">This protein is involved in the repair of mismatches in DNA. It is possible that it carries out the mismatch recognition step. This protein has a weak ATPase activity.</text>
</comment>
<comment type="similarity">
    <text evidence="1">Belongs to the DNA mismatch repair MutS family.</text>
</comment>
<sequence length="852" mass="95438">MAKEKISPGMQQYLDIKKNYPDAFLLFRMGDFYELFYDDAVKAAQILEISLTSRNKNADNPIPMAGVPYHSAQAYIDVLVEMGYKVAIAEQMEDPKQAVGVVKREVVQVITPGTVVDSSKPDSANNFLVAIDKVGSRFGLSYMDVSTGEFFATELDDFSSVCSEIQNLKAREVVVGYDLLETDEQVLVNQLNLLLSKETEGYDDVHLIGNSLTDLESSVASKLLQYVHRTQMRELSHLQKAQHYEIKDYLQMSYATKSSLDLLENARTGKKHGSLFWLLDKTKTAMGMRLLRTWIDRPLVNQASIIERQNIIQVFLDNFFERSDLAESLKGVYDIERLASRVSFGKANPKDLIQLGHTLAQVPVIKAILESFNDDALSGLLQELDALPELESLIRSAIDPDAPATITEGGIIRDGFDETLDKYRKVMSEGTSWIADIEAKEREASGITTLKIDYNRKDGYYFHVTNSNLSLVPDHFFRKATLKNSERFGTAELAKIEGEMLEAREKSSTLEYDIFMRVREQVERYIDRLQSLAKAIATVDVLQSLAVTAETNHYVRPVFNDEHRIAIDRGRHAVVEKVMGVQEYIPNTITFDSQTNIQLITGPNMSGKSTYMRQLALSVVMAQMGAYVPADSVDLPVFDAIYTRIGAADDLISGQSTFMVEMMEANQAIKRATPNSLIIFDELGRGTATYDGMALAQSIIEFIHDKVGAKTMFATHYHELTALSNSLTHLVNVHVATLEKDGEVTFLHKIVDGPADKSYGIHVAKIAGLPTDLLNRADTILTQLEGETVVIQPQEKVLSQEKPAIETHVNEQISLFDDFTENPVLQELRDLDIYNMTPMQVMMAVADLKQKL</sequence>
<gene>
    <name evidence="1" type="primary">mutS</name>
    <name type="ordered locus">str0050</name>
</gene>
<feature type="chain" id="PRO_0000224412" description="DNA mismatch repair protein MutS">
    <location>
        <begin position="1"/>
        <end position="852"/>
    </location>
</feature>
<feature type="binding site" evidence="1">
    <location>
        <begin position="602"/>
        <end position="609"/>
    </location>
    <ligand>
        <name>ATP</name>
        <dbReference type="ChEBI" id="CHEBI:30616"/>
    </ligand>
</feature>
<evidence type="ECO:0000255" key="1">
    <source>
        <dbReference type="HAMAP-Rule" id="MF_00096"/>
    </source>
</evidence>
<organism>
    <name type="scientific">Streptococcus thermophilus (strain CNRZ 1066)</name>
    <dbReference type="NCBI Taxonomy" id="299768"/>
    <lineage>
        <taxon>Bacteria</taxon>
        <taxon>Bacillati</taxon>
        <taxon>Bacillota</taxon>
        <taxon>Bacilli</taxon>
        <taxon>Lactobacillales</taxon>
        <taxon>Streptococcaceae</taxon>
        <taxon>Streptococcus</taxon>
    </lineage>
</organism>
<proteinExistence type="inferred from homology"/>
<name>MUTS_STRT1</name>
<protein>
    <recommendedName>
        <fullName evidence="1">DNA mismatch repair protein MutS</fullName>
    </recommendedName>
</protein>
<dbReference type="EMBL" id="CP000024">
    <property type="protein sequence ID" value="AAV61667.1"/>
    <property type="molecule type" value="Genomic_DNA"/>
</dbReference>
<dbReference type="RefSeq" id="WP_011226740.1">
    <property type="nucleotide sequence ID" value="NC_006449.1"/>
</dbReference>
<dbReference type="SMR" id="Q5M1Z0"/>
<dbReference type="KEGG" id="stc:str0050"/>
<dbReference type="HOGENOM" id="CLU_002472_3_1_9"/>
<dbReference type="GO" id="GO:0005829">
    <property type="term" value="C:cytosol"/>
    <property type="evidence" value="ECO:0007669"/>
    <property type="project" value="TreeGrafter"/>
</dbReference>
<dbReference type="GO" id="GO:0005524">
    <property type="term" value="F:ATP binding"/>
    <property type="evidence" value="ECO:0007669"/>
    <property type="project" value="UniProtKB-UniRule"/>
</dbReference>
<dbReference type="GO" id="GO:0140664">
    <property type="term" value="F:ATP-dependent DNA damage sensor activity"/>
    <property type="evidence" value="ECO:0007669"/>
    <property type="project" value="InterPro"/>
</dbReference>
<dbReference type="GO" id="GO:0003684">
    <property type="term" value="F:damaged DNA binding"/>
    <property type="evidence" value="ECO:0007669"/>
    <property type="project" value="UniProtKB-UniRule"/>
</dbReference>
<dbReference type="GO" id="GO:0030983">
    <property type="term" value="F:mismatched DNA binding"/>
    <property type="evidence" value="ECO:0007669"/>
    <property type="project" value="InterPro"/>
</dbReference>
<dbReference type="GO" id="GO:0006298">
    <property type="term" value="P:mismatch repair"/>
    <property type="evidence" value="ECO:0007669"/>
    <property type="project" value="UniProtKB-UniRule"/>
</dbReference>
<dbReference type="CDD" id="cd03284">
    <property type="entry name" value="ABC_MutS1"/>
    <property type="match status" value="1"/>
</dbReference>
<dbReference type="FunFam" id="1.10.1420.10:FF:000001">
    <property type="entry name" value="DNA mismatch repair protein MutS"/>
    <property type="match status" value="1"/>
</dbReference>
<dbReference type="FunFam" id="3.40.1170.10:FF:000001">
    <property type="entry name" value="DNA mismatch repair protein MutS"/>
    <property type="match status" value="1"/>
</dbReference>
<dbReference type="FunFam" id="3.40.50.300:FF:000896">
    <property type="entry name" value="DNA mismatch repair protein MutS"/>
    <property type="match status" value="1"/>
</dbReference>
<dbReference type="Gene3D" id="1.10.1420.10">
    <property type="match status" value="2"/>
</dbReference>
<dbReference type="Gene3D" id="3.40.1170.10">
    <property type="entry name" value="DNA repair protein MutS, domain I"/>
    <property type="match status" value="1"/>
</dbReference>
<dbReference type="Gene3D" id="3.30.420.110">
    <property type="entry name" value="MutS, connector domain"/>
    <property type="match status" value="1"/>
</dbReference>
<dbReference type="Gene3D" id="3.40.50.300">
    <property type="entry name" value="P-loop containing nucleotide triphosphate hydrolases"/>
    <property type="match status" value="1"/>
</dbReference>
<dbReference type="HAMAP" id="MF_00096">
    <property type="entry name" value="MutS"/>
    <property type="match status" value="1"/>
</dbReference>
<dbReference type="InterPro" id="IPR005748">
    <property type="entry name" value="DNA_mismatch_repair_MutS"/>
</dbReference>
<dbReference type="InterPro" id="IPR007695">
    <property type="entry name" value="DNA_mismatch_repair_MutS-lik_N"/>
</dbReference>
<dbReference type="InterPro" id="IPR017261">
    <property type="entry name" value="DNA_mismatch_repair_MutS/MSH"/>
</dbReference>
<dbReference type="InterPro" id="IPR000432">
    <property type="entry name" value="DNA_mismatch_repair_MutS_C"/>
</dbReference>
<dbReference type="InterPro" id="IPR007861">
    <property type="entry name" value="DNA_mismatch_repair_MutS_clamp"/>
</dbReference>
<dbReference type="InterPro" id="IPR007696">
    <property type="entry name" value="DNA_mismatch_repair_MutS_core"/>
</dbReference>
<dbReference type="InterPro" id="IPR016151">
    <property type="entry name" value="DNA_mismatch_repair_MutS_N"/>
</dbReference>
<dbReference type="InterPro" id="IPR036187">
    <property type="entry name" value="DNA_mismatch_repair_MutS_sf"/>
</dbReference>
<dbReference type="InterPro" id="IPR007860">
    <property type="entry name" value="DNA_mmatch_repair_MutS_con_dom"/>
</dbReference>
<dbReference type="InterPro" id="IPR045076">
    <property type="entry name" value="MutS"/>
</dbReference>
<dbReference type="InterPro" id="IPR036678">
    <property type="entry name" value="MutS_con_dom_sf"/>
</dbReference>
<dbReference type="InterPro" id="IPR027417">
    <property type="entry name" value="P-loop_NTPase"/>
</dbReference>
<dbReference type="NCBIfam" id="TIGR01070">
    <property type="entry name" value="mutS1"/>
    <property type="match status" value="1"/>
</dbReference>
<dbReference type="NCBIfam" id="NF003810">
    <property type="entry name" value="PRK05399.1"/>
    <property type="match status" value="1"/>
</dbReference>
<dbReference type="PANTHER" id="PTHR11361:SF34">
    <property type="entry name" value="DNA MISMATCH REPAIR PROTEIN MSH1, MITOCHONDRIAL"/>
    <property type="match status" value="1"/>
</dbReference>
<dbReference type="PANTHER" id="PTHR11361">
    <property type="entry name" value="DNA MISMATCH REPAIR PROTEIN MUTS FAMILY MEMBER"/>
    <property type="match status" value="1"/>
</dbReference>
<dbReference type="Pfam" id="PF01624">
    <property type="entry name" value="MutS_I"/>
    <property type="match status" value="1"/>
</dbReference>
<dbReference type="Pfam" id="PF05188">
    <property type="entry name" value="MutS_II"/>
    <property type="match status" value="1"/>
</dbReference>
<dbReference type="Pfam" id="PF05192">
    <property type="entry name" value="MutS_III"/>
    <property type="match status" value="1"/>
</dbReference>
<dbReference type="Pfam" id="PF05190">
    <property type="entry name" value="MutS_IV"/>
    <property type="match status" value="1"/>
</dbReference>
<dbReference type="Pfam" id="PF00488">
    <property type="entry name" value="MutS_V"/>
    <property type="match status" value="1"/>
</dbReference>
<dbReference type="PIRSF" id="PIRSF037677">
    <property type="entry name" value="DNA_mis_repair_Msh6"/>
    <property type="match status" value="1"/>
</dbReference>
<dbReference type="SMART" id="SM00534">
    <property type="entry name" value="MUTSac"/>
    <property type="match status" value="1"/>
</dbReference>
<dbReference type="SMART" id="SM00533">
    <property type="entry name" value="MUTSd"/>
    <property type="match status" value="1"/>
</dbReference>
<dbReference type="SUPFAM" id="SSF55271">
    <property type="entry name" value="DNA repair protein MutS, domain I"/>
    <property type="match status" value="1"/>
</dbReference>
<dbReference type="SUPFAM" id="SSF53150">
    <property type="entry name" value="DNA repair protein MutS, domain II"/>
    <property type="match status" value="1"/>
</dbReference>
<dbReference type="SUPFAM" id="SSF48334">
    <property type="entry name" value="DNA repair protein MutS, domain III"/>
    <property type="match status" value="1"/>
</dbReference>
<dbReference type="SUPFAM" id="SSF52540">
    <property type="entry name" value="P-loop containing nucleoside triphosphate hydrolases"/>
    <property type="match status" value="1"/>
</dbReference>
<dbReference type="PROSITE" id="PS00486">
    <property type="entry name" value="DNA_MISMATCH_REPAIR_2"/>
    <property type="match status" value="1"/>
</dbReference>
<reference key="1">
    <citation type="journal article" date="2004" name="Nat. Biotechnol.">
        <title>Complete sequence and comparative genome analysis of the dairy bacterium Streptococcus thermophilus.</title>
        <authorList>
            <person name="Bolotin A."/>
            <person name="Quinquis B."/>
            <person name="Renault P."/>
            <person name="Sorokin A."/>
            <person name="Ehrlich S.D."/>
            <person name="Kulakauskas S."/>
            <person name="Lapidus A."/>
            <person name="Goltsman E."/>
            <person name="Mazur M."/>
            <person name="Pusch G.D."/>
            <person name="Fonstein M."/>
            <person name="Overbeek R."/>
            <person name="Kyprides N."/>
            <person name="Purnelle B."/>
            <person name="Prozzi D."/>
            <person name="Ngui K."/>
            <person name="Masuy D."/>
            <person name="Hancy F."/>
            <person name="Burteau S."/>
            <person name="Boutry M."/>
            <person name="Delcour J."/>
            <person name="Goffeau A."/>
            <person name="Hols P."/>
        </authorList>
    </citation>
    <scope>NUCLEOTIDE SEQUENCE [LARGE SCALE GENOMIC DNA]</scope>
    <source>
        <strain>CNRZ 1066</strain>
    </source>
</reference>